<gene>
    <name evidence="1" type="primary">hemF</name>
    <name type="ordered locus">A9601_17891</name>
</gene>
<protein>
    <recommendedName>
        <fullName evidence="1">Oxygen-dependent coproporphyrinogen-III oxidase</fullName>
        <shortName evidence="1">CPO</shortName>
        <shortName evidence="1">Coprogen oxidase</shortName>
        <shortName evidence="1">Coproporphyrinogenase</shortName>
        <ecNumber evidence="1">1.3.3.3</ecNumber>
    </recommendedName>
</protein>
<evidence type="ECO:0000255" key="1">
    <source>
        <dbReference type="HAMAP-Rule" id="MF_00333"/>
    </source>
</evidence>
<sequence>MLKEPPKNSREKTKNLLLTLQDKICSGLENVDGKGKFTEESWLRDEGGGGRSRVLKNGSIFEQAGVNFSEVQGKELPQSIISQRPEAKGHEWFATGTSMVLHPKNPYIPTVHLNYRYFEAGPVWWFGGGADLTPFYPYLSDVRNFHNEHKKACEKVDQDLHKVFKPWCDEYFFLKHRNESRGIGGIFYDYQDGSGNIYRGNNKNGEASKASQNVGRSNLNWDNLFSLAENCGQAFLPSYLPIIEKRASQKYSPKEREFQLYRRGRYVEFNLVWDRGTIFGLQTNGRTESILMSLPPLARWEYGYKAKNGSREEFLTSIFTKPQDWFNDKELEKFCMENNIFD</sequence>
<organism>
    <name type="scientific">Prochlorococcus marinus (strain AS9601)</name>
    <dbReference type="NCBI Taxonomy" id="146891"/>
    <lineage>
        <taxon>Bacteria</taxon>
        <taxon>Bacillati</taxon>
        <taxon>Cyanobacteriota</taxon>
        <taxon>Cyanophyceae</taxon>
        <taxon>Synechococcales</taxon>
        <taxon>Prochlorococcaceae</taxon>
        <taxon>Prochlorococcus</taxon>
    </lineage>
</organism>
<keyword id="KW-0149">Chlorophyll biosynthesis</keyword>
<keyword id="KW-0963">Cytoplasm</keyword>
<keyword id="KW-0350">Heme biosynthesis</keyword>
<keyword id="KW-0479">Metal-binding</keyword>
<keyword id="KW-0560">Oxidoreductase</keyword>
<keyword id="KW-0627">Porphyrin biosynthesis</keyword>
<accession>A2BTG1</accession>
<reference key="1">
    <citation type="journal article" date="2007" name="PLoS Genet.">
        <title>Patterns and implications of gene gain and loss in the evolution of Prochlorococcus.</title>
        <authorList>
            <person name="Kettler G.C."/>
            <person name="Martiny A.C."/>
            <person name="Huang K."/>
            <person name="Zucker J."/>
            <person name="Coleman M.L."/>
            <person name="Rodrigue S."/>
            <person name="Chen F."/>
            <person name="Lapidus A."/>
            <person name="Ferriera S."/>
            <person name="Johnson J."/>
            <person name="Steglich C."/>
            <person name="Church G.M."/>
            <person name="Richardson P."/>
            <person name="Chisholm S.W."/>
        </authorList>
    </citation>
    <scope>NUCLEOTIDE SEQUENCE [LARGE SCALE GENOMIC DNA]</scope>
    <source>
        <strain>AS9601</strain>
    </source>
</reference>
<feature type="chain" id="PRO_1000019480" description="Oxygen-dependent coproporphyrinogen-III oxidase">
    <location>
        <begin position="1"/>
        <end position="342"/>
    </location>
</feature>
<feature type="region of interest" description="Important for dimerization" evidence="1">
    <location>
        <begin position="266"/>
        <end position="301"/>
    </location>
</feature>
<feature type="active site" description="Proton donor" evidence="1">
    <location>
        <position position="112"/>
    </location>
</feature>
<feature type="binding site" evidence="1">
    <location>
        <position position="98"/>
    </location>
    <ligand>
        <name>substrate</name>
    </ligand>
</feature>
<feature type="binding site" evidence="1">
    <location>
        <position position="102"/>
    </location>
    <ligand>
        <name>a divalent metal cation</name>
        <dbReference type="ChEBI" id="CHEBI:60240"/>
    </ligand>
</feature>
<feature type="binding site" evidence="1">
    <location>
        <position position="112"/>
    </location>
    <ligand>
        <name>a divalent metal cation</name>
        <dbReference type="ChEBI" id="CHEBI:60240"/>
    </ligand>
</feature>
<feature type="binding site" evidence="1">
    <location>
        <begin position="114"/>
        <end position="116"/>
    </location>
    <ligand>
        <name>substrate</name>
    </ligand>
</feature>
<feature type="binding site" evidence="1">
    <location>
        <position position="146"/>
    </location>
    <ligand>
        <name>a divalent metal cation</name>
        <dbReference type="ChEBI" id="CHEBI:60240"/>
    </ligand>
</feature>
<feature type="binding site" evidence="1">
    <location>
        <position position="176"/>
    </location>
    <ligand>
        <name>a divalent metal cation</name>
        <dbReference type="ChEBI" id="CHEBI:60240"/>
    </ligand>
</feature>
<feature type="site" description="Important for dimerization" evidence="1">
    <location>
        <position position="176"/>
    </location>
</feature>
<name>HEM6_PROMS</name>
<comment type="function">
    <text evidence="1">Involved in the heme and chlorophyll biosynthesis. Catalyzes the aerobic oxidative decarboxylation of propionate groups of rings A and B of coproporphyrinogen-III to yield the vinyl groups in protoporphyrinogen-IX.</text>
</comment>
<comment type="catalytic activity">
    <reaction evidence="1">
        <text>coproporphyrinogen III + O2 + 2 H(+) = protoporphyrinogen IX + 2 CO2 + 2 H2O</text>
        <dbReference type="Rhea" id="RHEA:18257"/>
        <dbReference type="ChEBI" id="CHEBI:15377"/>
        <dbReference type="ChEBI" id="CHEBI:15378"/>
        <dbReference type="ChEBI" id="CHEBI:15379"/>
        <dbReference type="ChEBI" id="CHEBI:16526"/>
        <dbReference type="ChEBI" id="CHEBI:57307"/>
        <dbReference type="ChEBI" id="CHEBI:57309"/>
        <dbReference type="EC" id="1.3.3.3"/>
    </reaction>
</comment>
<comment type="cofactor">
    <cofactor evidence="1">
        <name>a divalent metal cation</name>
        <dbReference type="ChEBI" id="CHEBI:60240"/>
    </cofactor>
</comment>
<comment type="pathway">
    <text evidence="1">Porphyrin-containing compound metabolism; protoporphyrin-IX biosynthesis; protoporphyrinogen-IX from coproporphyrinogen-III (O2 route): step 1/1.</text>
</comment>
<comment type="subunit">
    <text evidence="1">Homodimer.</text>
</comment>
<comment type="subcellular location">
    <subcellularLocation>
        <location evidence="1">Cytoplasm</location>
    </subcellularLocation>
</comment>
<comment type="similarity">
    <text evidence="1">Belongs to the aerobic coproporphyrinogen-III oxidase family.</text>
</comment>
<proteinExistence type="inferred from homology"/>
<dbReference type="EC" id="1.3.3.3" evidence="1"/>
<dbReference type="EMBL" id="CP000551">
    <property type="protein sequence ID" value="ABM71072.1"/>
    <property type="molecule type" value="Genomic_DNA"/>
</dbReference>
<dbReference type="RefSeq" id="WP_011819194.1">
    <property type="nucleotide sequence ID" value="NC_008816.1"/>
</dbReference>
<dbReference type="SMR" id="A2BTG1"/>
<dbReference type="STRING" id="146891.A9601_17891"/>
<dbReference type="KEGG" id="pmb:A9601_17891"/>
<dbReference type="eggNOG" id="COG0408">
    <property type="taxonomic scope" value="Bacteria"/>
</dbReference>
<dbReference type="HOGENOM" id="CLU_026169_0_1_3"/>
<dbReference type="OrthoDB" id="9777553at2"/>
<dbReference type="UniPathway" id="UPA00251">
    <property type="reaction ID" value="UER00322"/>
</dbReference>
<dbReference type="Proteomes" id="UP000002590">
    <property type="component" value="Chromosome"/>
</dbReference>
<dbReference type="GO" id="GO:0005737">
    <property type="term" value="C:cytoplasm"/>
    <property type="evidence" value="ECO:0007669"/>
    <property type="project" value="UniProtKB-SubCell"/>
</dbReference>
<dbReference type="GO" id="GO:0004109">
    <property type="term" value="F:coproporphyrinogen oxidase activity"/>
    <property type="evidence" value="ECO:0007669"/>
    <property type="project" value="UniProtKB-UniRule"/>
</dbReference>
<dbReference type="GO" id="GO:0046872">
    <property type="term" value="F:metal ion binding"/>
    <property type="evidence" value="ECO:0007669"/>
    <property type="project" value="UniProtKB-KW"/>
</dbReference>
<dbReference type="GO" id="GO:0042803">
    <property type="term" value="F:protein homodimerization activity"/>
    <property type="evidence" value="ECO:0000250"/>
    <property type="project" value="UniProtKB"/>
</dbReference>
<dbReference type="GO" id="GO:0015995">
    <property type="term" value="P:chlorophyll biosynthetic process"/>
    <property type="evidence" value="ECO:0007669"/>
    <property type="project" value="UniProtKB-UniRule"/>
</dbReference>
<dbReference type="GO" id="GO:0006782">
    <property type="term" value="P:protoporphyrinogen IX biosynthetic process"/>
    <property type="evidence" value="ECO:0007669"/>
    <property type="project" value="UniProtKB-UniRule"/>
</dbReference>
<dbReference type="FunFam" id="3.40.1500.10:FF:000007">
    <property type="entry name" value="Oxygen-dependent coproporphyrinogen-III oxidase"/>
    <property type="match status" value="1"/>
</dbReference>
<dbReference type="Gene3D" id="3.40.1500.10">
    <property type="entry name" value="Coproporphyrinogen III oxidase, aerobic"/>
    <property type="match status" value="1"/>
</dbReference>
<dbReference type="HAMAP" id="MF_00333">
    <property type="entry name" value="Coprogen_oxidas"/>
    <property type="match status" value="1"/>
</dbReference>
<dbReference type="InterPro" id="IPR001260">
    <property type="entry name" value="Coprogen_oxidase_aer"/>
</dbReference>
<dbReference type="InterPro" id="IPR036406">
    <property type="entry name" value="Coprogen_oxidase_aer_sf"/>
</dbReference>
<dbReference type="InterPro" id="IPR018375">
    <property type="entry name" value="Coprogen_oxidase_CS"/>
</dbReference>
<dbReference type="NCBIfam" id="NF003727">
    <property type="entry name" value="PRK05330.1"/>
    <property type="match status" value="1"/>
</dbReference>
<dbReference type="PANTHER" id="PTHR10755">
    <property type="entry name" value="COPROPORPHYRINOGEN III OXIDASE, MITOCHONDRIAL"/>
    <property type="match status" value="1"/>
</dbReference>
<dbReference type="PANTHER" id="PTHR10755:SF0">
    <property type="entry name" value="OXYGEN-DEPENDENT COPROPORPHYRINOGEN-III OXIDASE, MITOCHONDRIAL"/>
    <property type="match status" value="1"/>
</dbReference>
<dbReference type="Pfam" id="PF01218">
    <property type="entry name" value="Coprogen_oxidas"/>
    <property type="match status" value="1"/>
</dbReference>
<dbReference type="PIRSF" id="PIRSF000166">
    <property type="entry name" value="Coproporphyri_ox"/>
    <property type="match status" value="1"/>
</dbReference>
<dbReference type="PRINTS" id="PR00073">
    <property type="entry name" value="COPRGNOXDASE"/>
</dbReference>
<dbReference type="SUPFAM" id="SSF102886">
    <property type="entry name" value="Coproporphyrinogen III oxidase"/>
    <property type="match status" value="1"/>
</dbReference>
<dbReference type="PROSITE" id="PS01021">
    <property type="entry name" value="COPROGEN_OXIDASE"/>
    <property type="match status" value="1"/>
</dbReference>